<evidence type="ECO:0000255" key="1">
    <source>
        <dbReference type="HAMAP-Rule" id="MF_01849"/>
    </source>
</evidence>
<evidence type="ECO:0000255" key="2">
    <source>
        <dbReference type="PROSITE-ProRule" id="PRU01266"/>
    </source>
</evidence>
<evidence type="ECO:0000256" key="3">
    <source>
        <dbReference type="SAM" id="MobiDB-lite"/>
    </source>
</evidence>
<comment type="function">
    <text evidence="1">Specifically methylates position 2 of adenine 2503 in 23S rRNA and position 2 of adenine 37 in tRNAs.</text>
</comment>
<comment type="catalytic activity">
    <reaction evidence="1">
        <text>adenosine(2503) in 23S rRNA + 2 reduced [2Fe-2S]-[ferredoxin] + 2 S-adenosyl-L-methionine = 2-methyladenosine(2503) in 23S rRNA + 5'-deoxyadenosine + L-methionine + 2 oxidized [2Fe-2S]-[ferredoxin] + S-adenosyl-L-homocysteine</text>
        <dbReference type="Rhea" id="RHEA:42916"/>
        <dbReference type="Rhea" id="RHEA-COMP:10000"/>
        <dbReference type="Rhea" id="RHEA-COMP:10001"/>
        <dbReference type="Rhea" id="RHEA-COMP:10152"/>
        <dbReference type="Rhea" id="RHEA-COMP:10282"/>
        <dbReference type="ChEBI" id="CHEBI:17319"/>
        <dbReference type="ChEBI" id="CHEBI:33737"/>
        <dbReference type="ChEBI" id="CHEBI:33738"/>
        <dbReference type="ChEBI" id="CHEBI:57844"/>
        <dbReference type="ChEBI" id="CHEBI:57856"/>
        <dbReference type="ChEBI" id="CHEBI:59789"/>
        <dbReference type="ChEBI" id="CHEBI:74411"/>
        <dbReference type="ChEBI" id="CHEBI:74497"/>
        <dbReference type="EC" id="2.1.1.192"/>
    </reaction>
</comment>
<comment type="catalytic activity">
    <reaction evidence="1">
        <text>adenosine(37) in tRNA + 2 reduced [2Fe-2S]-[ferredoxin] + 2 S-adenosyl-L-methionine = 2-methyladenosine(37) in tRNA + 5'-deoxyadenosine + L-methionine + 2 oxidized [2Fe-2S]-[ferredoxin] + S-adenosyl-L-homocysteine</text>
        <dbReference type="Rhea" id="RHEA:43332"/>
        <dbReference type="Rhea" id="RHEA-COMP:10000"/>
        <dbReference type="Rhea" id="RHEA-COMP:10001"/>
        <dbReference type="Rhea" id="RHEA-COMP:10162"/>
        <dbReference type="Rhea" id="RHEA-COMP:10485"/>
        <dbReference type="ChEBI" id="CHEBI:17319"/>
        <dbReference type="ChEBI" id="CHEBI:33737"/>
        <dbReference type="ChEBI" id="CHEBI:33738"/>
        <dbReference type="ChEBI" id="CHEBI:57844"/>
        <dbReference type="ChEBI" id="CHEBI:57856"/>
        <dbReference type="ChEBI" id="CHEBI:59789"/>
        <dbReference type="ChEBI" id="CHEBI:74411"/>
        <dbReference type="ChEBI" id="CHEBI:74497"/>
        <dbReference type="EC" id="2.1.1.192"/>
    </reaction>
</comment>
<comment type="cofactor">
    <cofactor evidence="1">
        <name>[4Fe-4S] cluster</name>
        <dbReference type="ChEBI" id="CHEBI:49883"/>
    </cofactor>
    <text evidence="1">Binds 1 [4Fe-4S] cluster. The cluster is coordinated with 3 cysteines and an exchangeable S-adenosyl-L-methionine.</text>
</comment>
<comment type="subcellular location">
    <subcellularLocation>
        <location evidence="1">Cytoplasm</location>
    </subcellularLocation>
</comment>
<comment type="miscellaneous">
    <text evidence="1">Reaction proceeds by a ping-pong mechanism involving intermediate methylation of a conserved cysteine residue.</text>
</comment>
<comment type="similarity">
    <text evidence="1">Belongs to the radical SAM superfamily. RlmN family.</text>
</comment>
<gene>
    <name evidence="1" type="primary">rlmN</name>
    <name type="ordered locus">CT1183</name>
</gene>
<name>RLMN_CHLTE</name>
<feature type="chain" id="PRO_0000350104" description="Probable dual-specificity RNA methyltransferase RlmN">
    <location>
        <begin position="1"/>
        <end position="374"/>
    </location>
</feature>
<feature type="domain" description="Radical SAM core" evidence="2">
    <location>
        <begin position="125"/>
        <end position="360"/>
    </location>
</feature>
<feature type="region of interest" description="Disordered" evidence="3">
    <location>
        <begin position="1"/>
        <end position="22"/>
    </location>
</feature>
<feature type="compositionally biased region" description="Basic and acidic residues" evidence="3">
    <location>
        <begin position="1"/>
        <end position="17"/>
    </location>
</feature>
<feature type="active site" description="Proton acceptor" evidence="1">
    <location>
        <position position="119"/>
    </location>
</feature>
<feature type="active site" description="S-methylcysteine intermediate" evidence="1">
    <location>
        <position position="365"/>
    </location>
</feature>
<feature type="binding site" evidence="1">
    <location>
        <position position="139"/>
    </location>
    <ligand>
        <name>[4Fe-4S] cluster</name>
        <dbReference type="ChEBI" id="CHEBI:49883"/>
        <note>4Fe-4S-S-AdoMet</note>
    </ligand>
</feature>
<feature type="binding site" evidence="1">
    <location>
        <position position="143"/>
    </location>
    <ligand>
        <name>[4Fe-4S] cluster</name>
        <dbReference type="ChEBI" id="CHEBI:49883"/>
        <note>4Fe-4S-S-AdoMet</note>
    </ligand>
</feature>
<feature type="binding site" evidence="1">
    <location>
        <position position="146"/>
    </location>
    <ligand>
        <name>[4Fe-4S] cluster</name>
        <dbReference type="ChEBI" id="CHEBI:49883"/>
        <note>4Fe-4S-S-AdoMet</note>
    </ligand>
</feature>
<feature type="binding site" evidence="1">
    <location>
        <begin position="190"/>
        <end position="191"/>
    </location>
    <ligand>
        <name>S-adenosyl-L-methionine</name>
        <dbReference type="ChEBI" id="CHEBI:59789"/>
    </ligand>
</feature>
<feature type="binding site" evidence="1">
    <location>
        <position position="223"/>
    </location>
    <ligand>
        <name>S-adenosyl-L-methionine</name>
        <dbReference type="ChEBI" id="CHEBI:59789"/>
    </ligand>
</feature>
<feature type="binding site" evidence="1">
    <location>
        <begin position="246"/>
        <end position="248"/>
    </location>
    <ligand>
        <name>S-adenosyl-L-methionine</name>
        <dbReference type="ChEBI" id="CHEBI:59789"/>
    </ligand>
</feature>
<feature type="binding site" evidence="1">
    <location>
        <position position="322"/>
    </location>
    <ligand>
        <name>S-adenosyl-L-methionine</name>
        <dbReference type="ChEBI" id="CHEBI:59789"/>
    </ligand>
</feature>
<feature type="disulfide bond" description="(transient)" evidence="1">
    <location>
        <begin position="132"/>
        <end position="365"/>
    </location>
</feature>
<protein>
    <recommendedName>
        <fullName evidence="1">Probable dual-specificity RNA methyltransferase RlmN</fullName>
        <ecNumber evidence="1">2.1.1.192</ecNumber>
    </recommendedName>
    <alternativeName>
        <fullName evidence="1">23S rRNA (adenine(2503)-C(2))-methyltransferase</fullName>
    </alternativeName>
    <alternativeName>
        <fullName evidence="1">23S rRNA m2A2503 methyltransferase</fullName>
    </alternativeName>
    <alternativeName>
        <fullName evidence="1">Ribosomal RNA large subunit methyltransferase N</fullName>
    </alternativeName>
    <alternativeName>
        <fullName evidence="1">tRNA (adenine(37)-C(2))-methyltransferase</fullName>
    </alternativeName>
    <alternativeName>
        <fullName evidence="1">tRNA m2A37 methyltransferase</fullName>
    </alternativeName>
</protein>
<sequence>MEKNEISEERRTQEKEKQHGHRLNIRRLGRKELTELLTRLGEPAYRANQLHRWLYSNQALRFEEMSTLSKQLRQKLASEWIIHPASLVGTERETTDASLVTGNPTAKFLIKLEDNELVESVLIPSEERITACISSQIGCPLRCTFCATGHMGFRRNLTASEITDQVFLLEKEAQKRHWRGLTNIVFMGMGEPLLNLDNVLESIGTLTEKDYQFSISERKITISTVGLPVEMDRIARSGLKTKLAISLHSADQLIRERMMPIAADITLDKLAKAINSYNSVTSQPVTLVYMLLEGINDSPEDARKLVRFAKRVLCKINLIDYNSIVTLKFKPGCSSSKTMFIQQLLDAGLLVTVRKSQGATINAACGQLATRPVR</sequence>
<proteinExistence type="inferred from homology"/>
<keyword id="KW-0004">4Fe-4S</keyword>
<keyword id="KW-0963">Cytoplasm</keyword>
<keyword id="KW-1015">Disulfide bond</keyword>
<keyword id="KW-0408">Iron</keyword>
<keyword id="KW-0411">Iron-sulfur</keyword>
<keyword id="KW-0479">Metal-binding</keyword>
<keyword id="KW-0489">Methyltransferase</keyword>
<keyword id="KW-1185">Reference proteome</keyword>
<keyword id="KW-0698">rRNA processing</keyword>
<keyword id="KW-0949">S-adenosyl-L-methionine</keyword>
<keyword id="KW-0808">Transferase</keyword>
<keyword id="KW-0819">tRNA processing</keyword>
<accession>Q8KD71</accession>
<organism>
    <name type="scientific">Chlorobaculum tepidum (strain ATCC 49652 / DSM 12025 / NBRC 103806 / TLS)</name>
    <name type="common">Chlorobium tepidum</name>
    <dbReference type="NCBI Taxonomy" id="194439"/>
    <lineage>
        <taxon>Bacteria</taxon>
        <taxon>Pseudomonadati</taxon>
        <taxon>Chlorobiota</taxon>
        <taxon>Chlorobiia</taxon>
        <taxon>Chlorobiales</taxon>
        <taxon>Chlorobiaceae</taxon>
        <taxon>Chlorobaculum</taxon>
    </lineage>
</organism>
<dbReference type="EC" id="2.1.1.192" evidence="1"/>
<dbReference type="EMBL" id="AE006470">
    <property type="protein sequence ID" value="AAM72416.1"/>
    <property type="molecule type" value="Genomic_DNA"/>
</dbReference>
<dbReference type="RefSeq" id="NP_662074.1">
    <property type="nucleotide sequence ID" value="NC_002932.3"/>
</dbReference>
<dbReference type="RefSeq" id="WP_010932855.1">
    <property type="nucleotide sequence ID" value="NC_002932.3"/>
</dbReference>
<dbReference type="SMR" id="Q8KD71"/>
<dbReference type="STRING" id="194439.CT1183"/>
<dbReference type="EnsemblBacteria" id="AAM72416">
    <property type="protein sequence ID" value="AAM72416"/>
    <property type="gene ID" value="CT1183"/>
</dbReference>
<dbReference type="KEGG" id="cte:CT1183"/>
<dbReference type="PATRIC" id="fig|194439.7.peg.1078"/>
<dbReference type="eggNOG" id="COG0820">
    <property type="taxonomic scope" value="Bacteria"/>
</dbReference>
<dbReference type="HOGENOM" id="CLU_029101_2_0_10"/>
<dbReference type="OrthoDB" id="9793973at2"/>
<dbReference type="Proteomes" id="UP000001007">
    <property type="component" value="Chromosome"/>
</dbReference>
<dbReference type="GO" id="GO:0005737">
    <property type="term" value="C:cytoplasm"/>
    <property type="evidence" value="ECO:0007669"/>
    <property type="project" value="UniProtKB-SubCell"/>
</dbReference>
<dbReference type="GO" id="GO:0051539">
    <property type="term" value="F:4 iron, 4 sulfur cluster binding"/>
    <property type="evidence" value="ECO:0007669"/>
    <property type="project" value="UniProtKB-UniRule"/>
</dbReference>
<dbReference type="GO" id="GO:0046872">
    <property type="term" value="F:metal ion binding"/>
    <property type="evidence" value="ECO:0007669"/>
    <property type="project" value="UniProtKB-KW"/>
</dbReference>
<dbReference type="GO" id="GO:0070040">
    <property type="term" value="F:rRNA (adenine(2503)-C2-)-methyltransferase activity"/>
    <property type="evidence" value="ECO:0007669"/>
    <property type="project" value="UniProtKB-UniRule"/>
</dbReference>
<dbReference type="GO" id="GO:0019843">
    <property type="term" value="F:rRNA binding"/>
    <property type="evidence" value="ECO:0007669"/>
    <property type="project" value="UniProtKB-UniRule"/>
</dbReference>
<dbReference type="GO" id="GO:0002935">
    <property type="term" value="F:tRNA (adenine(37)-C2)-methyltransferase activity"/>
    <property type="evidence" value="ECO:0007669"/>
    <property type="project" value="UniProtKB-UniRule"/>
</dbReference>
<dbReference type="GO" id="GO:0000049">
    <property type="term" value="F:tRNA binding"/>
    <property type="evidence" value="ECO:0007669"/>
    <property type="project" value="UniProtKB-UniRule"/>
</dbReference>
<dbReference type="GO" id="GO:0070475">
    <property type="term" value="P:rRNA base methylation"/>
    <property type="evidence" value="ECO:0007669"/>
    <property type="project" value="UniProtKB-UniRule"/>
</dbReference>
<dbReference type="GO" id="GO:0030488">
    <property type="term" value="P:tRNA methylation"/>
    <property type="evidence" value="ECO:0007669"/>
    <property type="project" value="UniProtKB-UniRule"/>
</dbReference>
<dbReference type="CDD" id="cd01335">
    <property type="entry name" value="Radical_SAM"/>
    <property type="match status" value="1"/>
</dbReference>
<dbReference type="Gene3D" id="1.10.150.530">
    <property type="match status" value="1"/>
</dbReference>
<dbReference type="Gene3D" id="3.20.20.70">
    <property type="entry name" value="Aldolase class I"/>
    <property type="match status" value="1"/>
</dbReference>
<dbReference type="HAMAP" id="MF_01849">
    <property type="entry name" value="RNA_methyltr_RlmN"/>
    <property type="match status" value="1"/>
</dbReference>
<dbReference type="InterPro" id="IPR013785">
    <property type="entry name" value="Aldolase_TIM"/>
</dbReference>
<dbReference type="InterPro" id="IPR006638">
    <property type="entry name" value="Elp3/MiaA/NifB-like_rSAM"/>
</dbReference>
<dbReference type="InterPro" id="IPR040072">
    <property type="entry name" value="Methyltransferase_A"/>
</dbReference>
<dbReference type="InterPro" id="IPR048641">
    <property type="entry name" value="RlmN_N"/>
</dbReference>
<dbReference type="InterPro" id="IPR027492">
    <property type="entry name" value="RNA_MTrfase_RlmN"/>
</dbReference>
<dbReference type="InterPro" id="IPR004383">
    <property type="entry name" value="rRNA_lsu_MTrfase_RlmN/Cfr"/>
</dbReference>
<dbReference type="InterPro" id="IPR007197">
    <property type="entry name" value="rSAM"/>
</dbReference>
<dbReference type="NCBIfam" id="TIGR00048">
    <property type="entry name" value="rRNA_mod_RlmN"/>
    <property type="match status" value="1"/>
</dbReference>
<dbReference type="PANTHER" id="PTHR30544">
    <property type="entry name" value="23S RRNA METHYLTRANSFERASE"/>
    <property type="match status" value="1"/>
</dbReference>
<dbReference type="PANTHER" id="PTHR30544:SF5">
    <property type="entry name" value="RADICAL SAM CORE DOMAIN-CONTAINING PROTEIN"/>
    <property type="match status" value="1"/>
</dbReference>
<dbReference type="Pfam" id="PF04055">
    <property type="entry name" value="Radical_SAM"/>
    <property type="match status" value="1"/>
</dbReference>
<dbReference type="Pfam" id="PF21016">
    <property type="entry name" value="RlmN_N"/>
    <property type="match status" value="1"/>
</dbReference>
<dbReference type="PIRSF" id="PIRSF006004">
    <property type="entry name" value="CHP00048"/>
    <property type="match status" value="1"/>
</dbReference>
<dbReference type="SFLD" id="SFLDF00275">
    <property type="entry name" value="adenosine_C2_methyltransferase"/>
    <property type="match status" value="1"/>
</dbReference>
<dbReference type="SFLD" id="SFLDS00029">
    <property type="entry name" value="Radical_SAM"/>
    <property type="match status" value="1"/>
</dbReference>
<dbReference type="SMART" id="SM00729">
    <property type="entry name" value="Elp3"/>
    <property type="match status" value="1"/>
</dbReference>
<dbReference type="SUPFAM" id="SSF102114">
    <property type="entry name" value="Radical SAM enzymes"/>
    <property type="match status" value="1"/>
</dbReference>
<dbReference type="PROSITE" id="PS51918">
    <property type="entry name" value="RADICAL_SAM"/>
    <property type="match status" value="1"/>
</dbReference>
<reference key="1">
    <citation type="journal article" date="2002" name="Proc. Natl. Acad. Sci. U.S.A.">
        <title>The complete genome sequence of Chlorobium tepidum TLS, a photosynthetic, anaerobic, green-sulfur bacterium.</title>
        <authorList>
            <person name="Eisen J.A."/>
            <person name="Nelson K.E."/>
            <person name="Paulsen I.T."/>
            <person name="Heidelberg J.F."/>
            <person name="Wu M."/>
            <person name="Dodson R.J."/>
            <person name="DeBoy R.T."/>
            <person name="Gwinn M.L."/>
            <person name="Nelson W.C."/>
            <person name="Haft D.H."/>
            <person name="Hickey E.K."/>
            <person name="Peterson J.D."/>
            <person name="Durkin A.S."/>
            <person name="Kolonay J.F."/>
            <person name="Yang F."/>
            <person name="Holt I.E."/>
            <person name="Umayam L.A."/>
            <person name="Mason T.M."/>
            <person name="Brenner M."/>
            <person name="Shea T.P."/>
            <person name="Parksey D.S."/>
            <person name="Nierman W.C."/>
            <person name="Feldblyum T.V."/>
            <person name="Hansen C.L."/>
            <person name="Craven M.B."/>
            <person name="Radune D."/>
            <person name="Vamathevan J.J."/>
            <person name="Khouri H.M."/>
            <person name="White O."/>
            <person name="Gruber T.M."/>
            <person name="Ketchum K.A."/>
            <person name="Venter J.C."/>
            <person name="Tettelin H."/>
            <person name="Bryant D.A."/>
            <person name="Fraser C.M."/>
        </authorList>
    </citation>
    <scope>NUCLEOTIDE SEQUENCE [LARGE SCALE GENOMIC DNA]</scope>
    <source>
        <strain>ATCC 49652 / DSM 12025 / NBRC 103806 / TLS</strain>
    </source>
</reference>